<feature type="chain" id="PRO_0000375282" description="YcgL domain-containing protein Csal_1462">
    <location>
        <begin position="1"/>
        <end position="96"/>
    </location>
</feature>
<feature type="domain" description="YcgL" evidence="1">
    <location>
        <begin position="4"/>
        <end position="88"/>
    </location>
</feature>
<dbReference type="EMBL" id="CP000285">
    <property type="protein sequence ID" value="ABE58815.1"/>
    <property type="molecule type" value="Genomic_DNA"/>
</dbReference>
<dbReference type="RefSeq" id="WP_011506761.1">
    <property type="nucleotide sequence ID" value="NC_007963.1"/>
</dbReference>
<dbReference type="SMR" id="Q1QXJ3"/>
<dbReference type="STRING" id="290398.Csal_1462"/>
<dbReference type="GeneID" id="95334189"/>
<dbReference type="KEGG" id="csa:Csal_1462"/>
<dbReference type="eggNOG" id="COG3100">
    <property type="taxonomic scope" value="Bacteria"/>
</dbReference>
<dbReference type="HOGENOM" id="CLU_155118_2_0_6"/>
<dbReference type="OrthoDB" id="7062382at2"/>
<dbReference type="Proteomes" id="UP000000239">
    <property type="component" value="Chromosome"/>
</dbReference>
<dbReference type="Gene3D" id="3.10.510.20">
    <property type="entry name" value="YcgL domain"/>
    <property type="match status" value="1"/>
</dbReference>
<dbReference type="HAMAP" id="MF_01866">
    <property type="entry name" value="UPF0745"/>
    <property type="match status" value="1"/>
</dbReference>
<dbReference type="InterPro" id="IPR038068">
    <property type="entry name" value="YcgL-like_sf"/>
</dbReference>
<dbReference type="InterPro" id="IPR027354">
    <property type="entry name" value="YcgL_dom"/>
</dbReference>
<dbReference type="PANTHER" id="PTHR38109">
    <property type="entry name" value="PROTEIN YCGL"/>
    <property type="match status" value="1"/>
</dbReference>
<dbReference type="PANTHER" id="PTHR38109:SF1">
    <property type="entry name" value="PROTEIN YCGL"/>
    <property type="match status" value="1"/>
</dbReference>
<dbReference type="Pfam" id="PF05166">
    <property type="entry name" value="YcgL"/>
    <property type="match status" value="1"/>
</dbReference>
<dbReference type="SUPFAM" id="SSF160191">
    <property type="entry name" value="YcgL-like"/>
    <property type="match status" value="1"/>
</dbReference>
<dbReference type="PROSITE" id="PS51648">
    <property type="entry name" value="YCGL"/>
    <property type="match status" value="1"/>
</dbReference>
<name>Y1462_CHRSD</name>
<organism>
    <name type="scientific">Chromohalobacter salexigens (strain ATCC BAA-138 / DSM 3043 / CIP 106854 / NCIMB 13768 / 1H11)</name>
    <dbReference type="NCBI Taxonomy" id="290398"/>
    <lineage>
        <taxon>Bacteria</taxon>
        <taxon>Pseudomonadati</taxon>
        <taxon>Pseudomonadota</taxon>
        <taxon>Gammaproteobacteria</taxon>
        <taxon>Oceanospirillales</taxon>
        <taxon>Halomonadaceae</taxon>
        <taxon>Chromohalobacter</taxon>
    </lineage>
</organism>
<gene>
    <name type="ordered locus">Csal_1462</name>
</gene>
<evidence type="ECO:0000255" key="1">
    <source>
        <dbReference type="HAMAP-Rule" id="MF_01866"/>
    </source>
</evidence>
<reference key="1">
    <citation type="journal article" date="2011" name="Stand. Genomic Sci.">
        <title>Complete genome sequence of the halophilic and highly halotolerant Chromohalobacter salexigens type strain (1H11(T)).</title>
        <authorList>
            <person name="Copeland A."/>
            <person name="O'Connor K."/>
            <person name="Lucas S."/>
            <person name="Lapidus A."/>
            <person name="Berry K.W."/>
            <person name="Detter J.C."/>
            <person name="Del Rio T.G."/>
            <person name="Hammon N."/>
            <person name="Dalin E."/>
            <person name="Tice H."/>
            <person name="Pitluck S."/>
            <person name="Bruce D."/>
            <person name="Goodwin L."/>
            <person name="Han C."/>
            <person name="Tapia R."/>
            <person name="Saunders E."/>
            <person name="Schmutz J."/>
            <person name="Brettin T."/>
            <person name="Larimer F."/>
            <person name="Land M."/>
            <person name="Hauser L."/>
            <person name="Vargas C."/>
            <person name="Nieto J.J."/>
            <person name="Kyrpides N.C."/>
            <person name="Ivanova N."/>
            <person name="Goker M."/>
            <person name="Klenk H.P."/>
            <person name="Csonka L.N."/>
            <person name="Woyke T."/>
        </authorList>
    </citation>
    <scope>NUCLEOTIDE SEQUENCE [LARGE SCALE GENOMIC DNA]</scope>
    <source>
        <strain>ATCC BAA-138 / DSM 3043 / CIP 106854 / NCIMB 13768 / 1H11</strain>
    </source>
</reference>
<sequence length="96" mass="11040">MTRRLCEIFKSPRRDEMYLYVDRARGLADMPEALLERFGKPVPVTVLMLSEDKPLARAKASDVLAAIEAQGFYLQMPPARESYLLDLYRAPTEGRY</sequence>
<accession>Q1QXJ3</accession>
<proteinExistence type="inferred from homology"/>
<protein>
    <recommendedName>
        <fullName evidence="1">YcgL domain-containing protein Csal_1462</fullName>
    </recommendedName>
</protein>
<keyword id="KW-1185">Reference proteome</keyword>